<proteinExistence type="predicted"/>
<feature type="chain" id="PRO_0000066338" description="Uncharacterized 22.9 kDa protein in nqo2 3'region">
    <location>
        <begin position="1"/>
        <end position="214"/>
    </location>
</feature>
<name>YNQ2_PARDE</name>
<organism>
    <name type="scientific">Paracoccus denitrificans</name>
    <dbReference type="NCBI Taxonomy" id="266"/>
    <lineage>
        <taxon>Bacteria</taxon>
        <taxon>Pseudomonadati</taxon>
        <taxon>Pseudomonadota</taxon>
        <taxon>Alphaproteobacteria</taxon>
        <taxon>Rhodobacterales</taxon>
        <taxon>Paracoccaceae</taxon>
        <taxon>Paracoccus</taxon>
    </lineage>
</organism>
<reference key="1">
    <citation type="journal article" date="1991" name="Biochemistry">
        <title>Characterization of the 25-kilodalton subunit of the energy-transducing NADH-ubiquinone oxidoreductase of Paracoccus denitrificans: sequence similarity to the 24-kilodalton subunit of the flavoprotein fraction of mammalian complex I.</title>
        <authorList>
            <person name="Xu X."/>
            <person name="Matsuno-Yagi A."/>
            <person name="Yagi T."/>
        </authorList>
    </citation>
    <scope>NUCLEOTIDE SEQUENCE [GENOMIC DNA]</scope>
    <source>
        <strain>ATCC 13543 / NRRL B-3784 / NRC 449</strain>
    </source>
</reference>
<sequence>MERAECNRNCWISAAIAGVVVLLFTAGIGDLHWLAGLFLGVVTFVLFGALMVWLVCHERPELFEEGAGLTGTDWQRAAVDRQPETLLVGGSLGPEPFTSEAQMPIVAGAMPAEPLVEHRPEPKPAAAAKVARGADDLKRIKGIGPKISDWLNAQGVTRYDQIAAWDPATVDDFAQRLGRMGGRIEADDWVGQAKLLAAGGETGHSRRVDKGEVG</sequence>
<accession>P29908</accession>
<comment type="function">
    <text>URF2 product may be involved in the transfer of iron-sulfur clusters to the NADH dehydrogenase complex. It may also be required for the assembly of the NADH dehydrogenase complex.</text>
</comment>
<protein>
    <recommendedName>
        <fullName>Uncharacterized 22.9 kDa protein in nqo2 3'region</fullName>
    </recommendedName>
    <alternativeName>
        <fullName>URF2</fullName>
    </alternativeName>
</protein>
<dbReference type="EMBL" id="M74171">
    <property type="protein sequence ID" value="AAA25589.1"/>
    <property type="molecule type" value="Genomic_DNA"/>
</dbReference>
<dbReference type="PIR" id="B40296">
    <property type="entry name" value="B40296"/>
</dbReference>
<dbReference type="RefSeq" id="WP_011748531.1">
    <property type="nucleotide sequence ID" value="NZ_JAOSHR010000005.1"/>
</dbReference>
<dbReference type="SMR" id="P29908"/>
<dbReference type="GeneID" id="93450644"/>
<dbReference type="OMA" id="RNCWISA"/>
<dbReference type="Gene3D" id="1.10.150.20">
    <property type="entry name" value="5' to 3' exonuclease, C-terminal subdomain"/>
    <property type="match status" value="1"/>
</dbReference>